<protein>
    <recommendedName>
        <fullName evidence="1">Ribosome-recycling factor</fullName>
        <shortName evidence="1">RRF</shortName>
    </recommendedName>
    <alternativeName>
        <fullName evidence="1">Ribosome-releasing factor</fullName>
    </alternativeName>
</protein>
<feature type="chain" id="PRO_1000194915" description="Ribosome-recycling factor">
    <location>
        <begin position="1"/>
        <end position="186"/>
    </location>
</feature>
<proteinExistence type="inferred from homology"/>
<keyword id="KW-0963">Cytoplasm</keyword>
<keyword id="KW-0648">Protein biosynthesis</keyword>
<keyword id="KW-1185">Reference proteome</keyword>
<gene>
    <name evidence="1" type="primary">frr</name>
    <name type="ordered locus">COPRO5265_0741</name>
</gene>
<evidence type="ECO:0000255" key="1">
    <source>
        <dbReference type="HAMAP-Rule" id="MF_00040"/>
    </source>
</evidence>
<comment type="function">
    <text evidence="1">Responsible for the release of ribosomes from messenger RNA at the termination of protein biosynthesis. May increase the efficiency of translation by recycling ribosomes from one round of translation to another.</text>
</comment>
<comment type="subcellular location">
    <subcellularLocation>
        <location evidence="1">Cytoplasm</location>
    </subcellularLocation>
</comment>
<comment type="similarity">
    <text evidence="1">Belongs to the RRF family.</text>
</comment>
<accession>B5Y8J2</accession>
<organism>
    <name type="scientific">Coprothermobacter proteolyticus (strain ATCC 35245 / DSM 5265 / OCM 4 / BT)</name>
    <dbReference type="NCBI Taxonomy" id="309798"/>
    <lineage>
        <taxon>Bacteria</taxon>
        <taxon>Pseudomonadati</taxon>
        <taxon>Coprothermobacterota</taxon>
        <taxon>Coprothermobacteria</taxon>
        <taxon>Coprothermobacterales</taxon>
        <taxon>Coprothermobacteraceae</taxon>
        <taxon>Coprothermobacter</taxon>
    </lineage>
</organism>
<reference key="1">
    <citation type="submission" date="2008-08" db="EMBL/GenBank/DDBJ databases">
        <title>The complete genome sequence of Coprothermobacter proteolyticus strain ATCC 5245 / DSM 5265 / BT.</title>
        <authorList>
            <person name="Dodson R.J."/>
            <person name="Durkin A.S."/>
            <person name="Wu M."/>
            <person name="Eisen J."/>
            <person name="Sutton G."/>
        </authorList>
    </citation>
    <scope>NUCLEOTIDE SEQUENCE [LARGE SCALE GENOMIC DNA]</scope>
    <source>
        <strain>ATCC 35245 / DSM 5265 / OCM 4 / BT</strain>
    </source>
</reference>
<sequence>MKEHEITRQAREHFQKTINTMSDQLSTVRASRVSPAILEPVTVEYEGAKYKLSELAMVVAQDARTLIIEPWDVSMIPAISRSLQKANVGANPSDDGKRIKLVFPSLSQERREELARLVDKYLEEARIALRNIRREYIDEVKSKEKKKELSEDESRRIQNELQKAFEEYEKQMEQICQRKRKEIMEE</sequence>
<name>RRF_COPPD</name>
<dbReference type="EMBL" id="CP001145">
    <property type="protein sequence ID" value="ACI17769.1"/>
    <property type="molecule type" value="Genomic_DNA"/>
</dbReference>
<dbReference type="RefSeq" id="WP_012544421.1">
    <property type="nucleotide sequence ID" value="NC_011295.1"/>
</dbReference>
<dbReference type="SMR" id="B5Y8J2"/>
<dbReference type="STRING" id="309798.COPRO5265_0741"/>
<dbReference type="KEGG" id="cpo:COPRO5265_0741"/>
<dbReference type="eggNOG" id="COG0233">
    <property type="taxonomic scope" value="Bacteria"/>
</dbReference>
<dbReference type="HOGENOM" id="CLU_073981_2_0_9"/>
<dbReference type="OrthoDB" id="9804006at2"/>
<dbReference type="Proteomes" id="UP000001732">
    <property type="component" value="Chromosome"/>
</dbReference>
<dbReference type="GO" id="GO:0005737">
    <property type="term" value="C:cytoplasm"/>
    <property type="evidence" value="ECO:0007669"/>
    <property type="project" value="UniProtKB-SubCell"/>
</dbReference>
<dbReference type="GO" id="GO:0043023">
    <property type="term" value="F:ribosomal large subunit binding"/>
    <property type="evidence" value="ECO:0007669"/>
    <property type="project" value="TreeGrafter"/>
</dbReference>
<dbReference type="GO" id="GO:0006415">
    <property type="term" value="P:translational termination"/>
    <property type="evidence" value="ECO:0007669"/>
    <property type="project" value="UniProtKB-UniRule"/>
</dbReference>
<dbReference type="FunFam" id="1.10.132.20:FF:000001">
    <property type="entry name" value="Ribosome-recycling factor"/>
    <property type="match status" value="1"/>
</dbReference>
<dbReference type="FunFam" id="3.30.1360.40:FF:000001">
    <property type="entry name" value="Ribosome-recycling factor"/>
    <property type="match status" value="1"/>
</dbReference>
<dbReference type="Gene3D" id="3.30.1360.40">
    <property type="match status" value="1"/>
</dbReference>
<dbReference type="Gene3D" id="1.10.132.20">
    <property type="entry name" value="Ribosome-recycling factor"/>
    <property type="match status" value="1"/>
</dbReference>
<dbReference type="HAMAP" id="MF_00040">
    <property type="entry name" value="RRF"/>
    <property type="match status" value="1"/>
</dbReference>
<dbReference type="InterPro" id="IPR002661">
    <property type="entry name" value="Ribosome_recyc_fac"/>
</dbReference>
<dbReference type="InterPro" id="IPR023584">
    <property type="entry name" value="Ribosome_recyc_fac_dom"/>
</dbReference>
<dbReference type="InterPro" id="IPR036191">
    <property type="entry name" value="RRF_sf"/>
</dbReference>
<dbReference type="NCBIfam" id="TIGR00496">
    <property type="entry name" value="frr"/>
    <property type="match status" value="1"/>
</dbReference>
<dbReference type="PANTHER" id="PTHR20982:SF3">
    <property type="entry name" value="MITOCHONDRIAL RIBOSOME RECYCLING FACTOR PSEUDO 1"/>
    <property type="match status" value="1"/>
</dbReference>
<dbReference type="PANTHER" id="PTHR20982">
    <property type="entry name" value="RIBOSOME RECYCLING FACTOR"/>
    <property type="match status" value="1"/>
</dbReference>
<dbReference type="Pfam" id="PF01765">
    <property type="entry name" value="RRF"/>
    <property type="match status" value="1"/>
</dbReference>
<dbReference type="SUPFAM" id="SSF55194">
    <property type="entry name" value="Ribosome recycling factor, RRF"/>
    <property type="match status" value="1"/>
</dbReference>